<protein>
    <recommendedName>
        <fullName evidence="1">NADH-quinone oxidoreductase subunit K</fullName>
        <ecNumber evidence="1">7.1.1.-</ecNumber>
    </recommendedName>
    <alternativeName>
        <fullName evidence="1">NADH dehydrogenase I subunit K</fullName>
    </alternativeName>
    <alternativeName>
        <fullName evidence="1">NDH-1 subunit K</fullName>
    </alternativeName>
</protein>
<name>NUOK_CUPTR</name>
<keyword id="KW-0997">Cell inner membrane</keyword>
<keyword id="KW-1003">Cell membrane</keyword>
<keyword id="KW-0472">Membrane</keyword>
<keyword id="KW-0520">NAD</keyword>
<keyword id="KW-0874">Quinone</keyword>
<keyword id="KW-1278">Translocase</keyword>
<keyword id="KW-0812">Transmembrane</keyword>
<keyword id="KW-1133">Transmembrane helix</keyword>
<keyword id="KW-0813">Transport</keyword>
<keyword id="KW-0830">Ubiquinone</keyword>
<feature type="chain" id="PRO_0000390023" description="NADH-quinone oxidoreductase subunit K">
    <location>
        <begin position="1"/>
        <end position="101"/>
    </location>
</feature>
<feature type="transmembrane region" description="Helical" evidence="1">
    <location>
        <begin position="4"/>
        <end position="24"/>
    </location>
</feature>
<feature type="transmembrane region" description="Helical" evidence="1">
    <location>
        <begin position="30"/>
        <end position="50"/>
    </location>
</feature>
<feature type="transmembrane region" description="Helical" evidence="1">
    <location>
        <begin position="61"/>
        <end position="81"/>
    </location>
</feature>
<dbReference type="EC" id="7.1.1.-" evidence="1"/>
<dbReference type="EMBL" id="CU633749">
    <property type="protein sequence ID" value="CAQ69009.1"/>
    <property type="molecule type" value="Genomic_DNA"/>
</dbReference>
<dbReference type="RefSeq" id="WP_012352338.1">
    <property type="nucleotide sequence ID" value="NC_010528.1"/>
</dbReference>
<dbReference type="SMR" id="B3R3X7"/>
<dbReference type="GeneID" id="29762067"/>
<dbReference type="KEGG" id="cti:RALTA_A1044"/>
<dbReference type="eggNOG" id="COG0713">
    <property type="taxonomic scope" value="Bacteria"/>
</dbReference>
<dbReference type="HOGENOM" id="CLU_144724_2_0_4"/>
<dbReference type="BioCyc" id="CTAI977880:RALTA_RS04965-MONOMER"/>
<dbReference type="Proteomes" id="UP000001692">
    <property type="component" value="Chromosome 1"/>
</dbReference>
<dbReference type="GO" id="GO:0030964">
    <property type="term" value="C:NADH dehydrogenase complex"/>
    <property type="evidence" value="ECO:0007669"/>
    <property type="project" value="TreeGrafter"/>
</dbReference>
<dbReference type="GO" id="GO:0005886">
    <property type="term" value="C:plasma membrane"/>
    <property type="evidence" value="ECO:0007669"/>
    <property type="project" value="UniProtKB-SubCell"/>
</dbReference>
<dbReference type="GO" id="GO:0050136">
    <property type="term" value="F:NADH:ubiquinone reductase (non-electrogenic) activity"/>
    <property type="evidence" value="ECO:0007669"/>
    <property type="project" value="UniProtKB-UniRule"/>
</dbReference>
<dbReference type="GO" id="GO:0048038">
    <property type="term" value="F:quinone binding"/>
    <property type="evidence" value="ECO:0007669"/>
    <property type="project" value="UniProtKB-KW"/>
</dbReference>
<dbReference type="GO" id="GO:0042773">
    <property type="term" value="P:ATP synthesis coupled electron transport"/>
    <property type="evidence" value="ECO:0007669"/>
    <property type="project" value="InterPro"/>
</dbReference>
<dbReference type="FunFam" id="1.10.287.3510:FF:000001">
    <property type="entry name" value="NADH-quinone oxidoreductase subunit K"/>
    <property type="match status" value="1"/>
</dbReference>
<dbReference type="Gene3D" id="1.10.287.3510">
    <property type="match status" value="1"/>
</dbReference>
<dbReference type="HAMAP" id="MF_01456">
    <property type="entry name" value="NDH1_NuoK"/>
    <property type="match status" value="1"/>
</dbReference>
<dbReference type="InterPro" id="IPR001133">
    <property type="entry name" value="NADH_UbQ_OxRdtase_chain4L/K"/>
</dbReference>
<dbReference type="InterPro" id="IPR039428">
    <property type="entry name" value="NUOK/Mnh_C1-like"/>
</dbReference>
<dbReference type="NCBIfam" id="NF004320">
    <property type="entry name" value="PRK05715.1-2"/>
    <property type="match status" value="1"/>
</dbReference>
<dbReference type="NCBIfam" id="NF004321">
    <property type="entry name" value="PRK05715.1-3"/>
    <property type="match status" value="1"/>
</dbReference>
<dbReference type="NCBIfam" id="NF004323">
    <property type="entry name" value="PRK05715.1-5"/>
    <property type="match status" value="1"/>
</dbReference>
<dbReference type="PANTHER" id="PTHR11434:SF21">
    <property type="entry name" value="NADH DEHYDROGENASE SUBUNIT 4L-RELATED"/>
    <property type="match status" value="1"/>
</dbReference>
<dbReference type="PANTHER" id="PTHR11434">
    <property type="entry name" value="NADH-UBIQUINONE OXIDOREDUCTASE SUBUNIT ND4L"/>
    <property type="match status" value="1"/>
</dbReference>
<dbReference type="Pfam" id="PF00420">
    <property type="entry name" value="Oxidored_q2"/>
    <property type="match status" value="1"/>
</dbReference>
<sequence>MLSLAHFLVLGAILFAISIVGIFLNRKNVIVLLMAIELMLLAVNINFVAFSHYLGDLAGQVFVFFILTVAAAESAIGLAILVVLFRNLDTINVDDLDTLKG</sequence>
<comment type="function">
    <text evidence="1">NDH-1 shuttles electrons from NADH, via FMN and iron-sulfur (Fe-S) centers, to quinones in the respiratory chain. The immediate electron acceptor for the enzyme in this species is believed to be ubiquinone. Couples the redox reaction to proton translocation (for every two electrons transferred, four hydrogen ions are translocated across the cytoplasmic membrane), and thus conserves the redox energy in a proton gradient.</text>
</comment>
<comment type="catalytic activity">
    <reaction evidence="1">
        <text>a quinone + NADH + 5 H(+)(in) = a quinol + NAD(+) + 4 H(+)(out)</text>
        <dbReference type="Rhea" id="RHEA:57888"/>
        <dbReference type="ChEBI" id="CHEBI:15378"/>
        <dbReference type="ChEBI" id="CHEBI:24646"/>
        <dbReference type="ChEBI" id="CHEBI:57540"/>
        <dbReference type="ChEBI" id="CHEBI:57945"/>
        <dbReference type="ChEBI" id="CHEBI:132124"/>
    </reaction>
</comment>
<comment type="subunit">
    <text evidence="1">NDH-1 is composed of 14 different subunits. Subunits NuoA, H, J, K, L, M, N constitute the membrane sector of the complex.</text>
</comment>
<comment type="subcellular location">
    <subcellularLocation>
        <location evidence="1">Cell inner membrane</location>
        <topology evidence="1">Multi-pass membrane protein</topology>
    </subcellularLocation>
</comment>
<comment type="similarity">
    <text evidence="1">Belongs to the complex I subunit 4L family.</text>
</comment>
<accession>B3R3X7</accession>
<proteinExistence type="inferred from homology"/>
<reference key="1">
    <citation type="journal article" date="2008" name="Genome Res.">
        <title>Genome sequence of the beta-rhizobium Cupriavidus taiwanensis and comparative genomics of rhizobia.</title>
        <authorList>
            <person name="Amadou C."/>
            <person name="Pascal G."/>
            <person name="Mangenot S."/>
            <person name="Glew M."/>
            <person name="Bontemps C."/>
            <person name="Capela D."/>
            <person name="Carrere S."/>
            <person name="Cruveiller S."/>
            <person name="Dossat C."/>
            <person name="Lajus A."/>
            <person name="Marchetti M."/>
            <person name="Poinsot V."/>
            <person name="Rouy Z."/>
            <person name="Servin B."/>
            <person name="Saad M."/>
            <person name="Schenowitz C."/>
            <person name="Barbe V."/>
            <person name="Batut J."/>
            <person name="Medigue C."/>
            <person name="Masson-Boivin C."/>
        </authorList>
    </citation>
    <scope>NUCLEOTIDE SEQUENCE [LARGE SCALE GENOMIC DNA]</scope>
    <source>
        <strain>DSM 17343 / BCRC 17206 / CCUG 44338 / CIP 107171 / LMG 19424 / R1</strain>
    </source>
</reference>
<evidence type="ECO:0000255" key="1">
    <source>
        <dbReference type="HAMAP-Rule" id="MF_01456"/>
    </source>
</evidence>
<gene>
    <name evidence="1" type="primary">nuoK</name>
    <name type="ordered locus">RALTA_A1044</name>
</gene>
<organism>
    <name type="scientific">Cupriavidus taiwanensis (strain DSM 17343 / BCRC 17206 / CCUG 44338 / CIP 107171 / LMG 19424 / R1)</name>
    <name type="common">Ralstonia taiwanensis (strain LMG 19424)</name>
    <dbReference type="NCBI Taxonomy" id="977880"/>
    <lineage>
        <taxon>Bacteria</taxon>
        <taxon>Pseudomonadati</taxon>
        <taxon>Pseudomonadota</taxon>
        <taxon>Betaproteobacteria</taxon>
        <taxon>Burkholderiales</taxon>
        <taxon>Burkholderiaceae</taxon>
        <taxon>Cupriavidus</taxon>
    </lineage>
</organism>